<dbReference type="GO" id="GO:0005576">
    <property type="term" value="C:extracellular region"/>
    <property type="evidence" value="ECO:0007669"/>
    <property type="project" value="UniProtKB-SubCell"/>
</dbReference>
<dbReference type="GO" id="GO:0004623">
    <property type="term" value="F:phospholipase A2 activity"/>
    <property type="evidence" value="ECO:0007669"/>
    <property type="project" value="InterPro"/>
</dbReference>
<dbReference type="GO" id="GO:0050482">
    <property type="term" value="P:arachidonate secretion"/>
    <property type="evidence" value="ECO:0007669"/>
    <property type="project" value="InterPro"/>
</dbReference>
<dbReference type="GO" id="GO:0006644">
    <property type="term" value="P:phospholipid metabolic process"/>
    <property type="evidence" value="ECO:0007669"/>
    <property type="project" value="InterPro"/>
</dbReference>
<dbReference type="InterPro" id="IPR036444">
    <property type="entry name" value="PLipase_A2_dom_sf"/>
</dbReference>
<dbReference type="SUPFAM" id="SSF48619">
    <property type="entry name" value="Phospholipase A2, PLA2"/>
    <property type="match status" value="1"/>
</dbReference>
<name>PA2H1_MICPY</name>
<feature type="chain" id="PRO_0000376925" description="Phospholipase A2 homolog A1">
    <location>
        <begin position="1"/>
        <end position="26" status="greater than"/>
    </location>
</feature>
<feature type="non-terminal residue">
    <location>
        <position position="26"/>
    </location>
</feature>
<organism>
    <name type="scientific">Micrurus pyrrhocryptus</name>
    <name type="common">Coral snake</name>
    <dbReference type="NCBI Taxonomy" id="129468"/>
    <lineage>
        <taxon>Eukaryota</taxon>
        <taxon>Metazoa</taxon>
        <taxon>Chordata</taxon>
        <taxon>Craniata</taxon>
        <taxon>Vertebrata</taxon>
        <taxon>Euteleostomi</taxon>
        <taxon>Lepidosauria</taxon>
        <taxon>Squamata</taxon>
        <taxon>Bifurcata</taxon>
        <taxon>Unidentata</taxon>
        <taxon>Episquamata</taxon>
        <taxon>Toxicofera</taxon>
        <taxon>Serpentes</taxon>
        <taxon>Colubroidea</taxon>
        <taxon>Elapidae</taxon>
        <taxon>Elapinae</taxon>
        <taxon>Micrurus</taxon>
    </lineage>
</organism>
<comment type="subcellular location">
    <subcellularLocation>
        <location evidence="2">Secreted</location>
    </subcellularLocation>
</comment>
<comment type="tissue specificity">
    <text evidence="4">Expressed by the venom gland.</text>
</comment>
<comment type="PTM">
    <text evidence="1">Contains 7 disulfide bonds.</text>
</comment>
<comment type="mass spectrometry"/>
<comment type="similarity">
    <text evidence="3">Belongs to the phospholipase A2 family. Group I subfamily.</text>
</comment>
<evidence type="ECO:0000250" key="1"/>
<evidence type="ECO:0000269" key="2">
    <source>
    </source>
</evidence>
<evidence type="ECO:0000305" key="3"/>
<evidence type="ECO:0000305" key="4">
    <source>
    </source>
</evidence>
<accession>P0CAS8</accession>
<protein>
    <recommendedName>
        <fullName>Phospholipase A2 homolog A1</fullName>
        <shortName>svPLA2 homolog</shortName>
    </recommendedName>
</protein>
<sequence>NFKQIIKMIQCTNTRPWXNFLDYGCY</sequence>
<keyword id="KW-0903">Direct protein sequencing</keyword>
<keyword id="KW-1015">Disulfide bond</keyword>
<keyword id="KW-0964">Secreted</keyword>
<reference key="1">
    <citation type="journal article" date="2009" name="Toxicon">
        <title>Biochemical characterization of the Micrurus pyrrhocryptus venom.</title>
        <authorList>
            <person name="Dokmetjian J.C."/>
            <person name="Del Canto S."/>
            <person name="Vinzon S."/>
            <person name="de Jimenez Bonino M.B."/>
        </authorList>
    </citation>
    <scope>PROTEIN SEQUENCE</scope>
    <scope>MASS SPECTROMETRY</scope>
    <scope>SUBCELLULAR LOCATION</scope>
    <source>
        <tissue>Venom</tissue>
    </source>
</reference>
<proteinExistence type="evidence at protein level"/>